<keyword id="KW-1064">Adaptive immunity</keyword>
<keyword id="KW-0202">Cytokine</keyword>
<keyword id="KW-1015">Disulfide bond</keyword>
<keyword id="KW-0325">Glycoprotein</keyword>
<keyword id="KW-0339">Growth factor</keyword>
<keyword id="KW-0391">Immunity</keyword>
<keyword id="KW-1185">Reference proteome</keyword>
<keyword id="KW-0964">Secreted</keyword>
<keyword id="KW-0732">Signal</keyword>
<accession>Q2PE47</accession>
<name>IL2_CAMBA</name>
<feature type="signal peptide" evidence="1">
    <location>
        <begin position="1"/>
        <end position="20"/>
    </location>
</feature>
<feature type="chain" id="PRO_0000252358" description="Interleukin-2">
    <location>
        <begin position="21"/>
        <end position="154"/>
    </location>
</feature>
<feature type="glycosylation site" description="O-linked (GalNAc...) threonine" evidence="1">
    <location>
        <position position="23"/>
    </location>
</feature>
<feature type="glycosylation site" description="N-linked (GlcNAc...) asparagine" evidence="3">
    <location>
        <position position="111"/>
    </location>
</feature>
<feature type="disulfide bond" evidence="1">
    <location>
        <begin position="78"/>
        <end position="126"/>
    </location>
</feature>
<dbReference type="EMBL" id="AB246671">
    <property type="protein sequence ID" value="BAE75802.1"/>
    <property type="molecule type" value="mRNA"/>
</dbReference>
<dbReference type="RefSeq" id="XP_010950882.1">
    <property type="nucleotide sequence ID" value="XM_010952580.2"/>
</dbReference>
<dbReference type="SMR" id="Q2PE47"/>
<dbReference type="GlyCosmos" id="Q2PE47">
    <property type="glycosylation" value="2 sites, No reported glycans"/>
</dbReference>
<dbReference type="GeneID" id="105067115"/>
<dbReference type="KEGG" id="cbai:105067115"/>
<dbReference type="CTD" id="3558"/>
<dbReference type="OrthoDB" id="44456at91561"/>
<dbReference type="Proteomes" id="UP000694950">
    <property type="component" value="Unplaced"/>
</dbReference>
<dbReference type="GO" id="GO:0005615">
    <property type="term" value="C:extracellular space"/>
    <property type="evidence" value="ECO:0007669"/>
    <property type="project" value="UniProtKB-KW"/>
</dbReference>
<dbReference type="GO" id="GO:0005125">
    <property type="term" value="F:cytokine activity"/>
    <property type="evidence" value="ECO:0007669"/>
    <property type="project" value="UniProtKB-KW"/>
</dbReference>
<dbReference type="GO" id="GO:0008083">
    <property type="term" value="F:growth factor activity"/>
    <property type="evidence" value="ECO:0007669"/>
    <property type="project" value="UniProtKB-KW"/>
</dbReference>
<dbReference type="GO" id="GO:0005134">
    <property type="term" value="F:interleukin-2 receptor binding"/>
    <property type="evidence" value="ECO:0007669"/>
    <property type="project" value="InterPro"/>
</dbReference>
<dbReference type="GO" id="GO:0002250">
    <property type="term" value="P:adaptive immune response"/>
    <property type="evidence" value="ECO:0007669"/>
    <property type="project" value="UniProtKB-KW"/>
</dbReference>
<dbReference type="Gene3D" id="1.20.1250.10">
    <property type="match status" value="1"/>
</dbReference>
<dbReference type="InterPro" id="IPR009079">
    <property type="entry name" value="4_helix_cytokine-like_core"/>
</dbReference>
<dbReference type="InterPro" id="IPR000779">
    <property type="entry name" value="IL-2"/>
</dbReference>
<dbReference type="InterPro" id="IPR030477">
    <property type="entry name" value="IL-2_CS"/>
</dbReference>
<dbReference type="PANTHER" id="PTHR48487">
    <property type="entry name" value="INTERLEUKIN-2"/>
    <property type="match status" value="1"/>
</dbReference>
<dbReference type="PANTHER" id="PTHR48487:SF1">
    <property type="entry name" value="INTERLEUKIN-2"/>
    <property type="match status" value="1"/>
</dbReference>
<dbReference type="Pfam" id="PF00715">
    <property type="entry name" value="IL2"/>
    <property type="match status" value="1"/>
</dbReference>
<dbReference type="PRINTS" id="PR00265">
    <property type="entry name" value="INTERLEUKIN2"/>
</dbReference>
<dbReference type="SMART" id="SM00189">
    <property type="entry name" value="IL2"/>
    <property type="match status" value="1"/>
</dbReference>
<dbReference type="SUPFAM" id="SSF47266">
    <property type="entry name" value="4-helical cytokines"/>
    <property type="match status" value="1"/>
</dbReference>
<dbReference type="PROSITE" id="PS00424">
    <property type="entry name" value="INTERLEUKIN_2"/>
    <property type="match status" value="1"/>
</dbReference>
<proteinExistence type="evidence at transcript level"/>
<comment type="function">
    <text evidence="2">Cytokine produced by activated CD4-positive helper T-cells and to a lesser extend activated CD8-positive T-cells and natural killer (NK) cells that plays pivotal roles in the immune response and tolerance. Binds to a receptor complex composed of either the high-affinity trimeric IL-2R (IL2RA/CD25, IL2RB/CD122 and IL2RG/CD132) or the low-affinity dimeric IL-2R (IL2RB and IL2RG). Interaction with the receptor leads to oligomerization and conformation changes in the IL-2R subunits resulting in downstream signaling starting with phosphorylation of JAK1 and JAK3. In turn, JAK1 and JAK3 phosphorylate the receptor to form a docking site leading to the phosphorylation of several substrates including STAT5. This process leads to activation of several pathways including STAT, phosphoinositide-3-kinase/PI3K and mitogen-activated protein kinase/MAPK pathways. Functions as a T-cell growth factor and can increase NK-cell cytolytic activity as well. Promotes strong proliferation of activated B-cells and subsequently immunoglobulin production. Plays a pivotal role in regulating the adaptive immune system by controlling the survival and proliferation of regulatory T-cells, which are required for the maintenance of immune tolerance. Moreover, participates in the differentiation and homeostasis of effector T-cell subsets, including Th1, Th2, Th17 as well as memory CD8-positive T-cells.</text>
</comment>
<comment type="subcellular location">
    <subcellularLocation>
        <location>Secreted</location>
    </subcellularLocation>
</comment>
<comment type="similarity">
    <text evidence="4">Belongs to the IL-2 family.</text>
</comment>
<protein>
    <recommendedName>
        <fullName>Interleukin-2</fullName>
        <shortName>IL-2</shortName>
    </recommendedName>
    <alternativeName>
        <fullName>T-cell growth factor</fullName>
        <shortName>TCGF</shortName>
    </alternativeName>
</protein>
<reference key="1">
    <citation type="submission" date="2006-01" db="EMBL/GenBank/DDBJ databases">
        <title>Molecular cloning and sequence analysis of Th1 and Th2 cytokine cDNAs from the bactrian camel (Camelus bactrianus).</title>
        <authorList>
            <person name="Raadan O."/>
            <person name="Konnai S."/>
            <person name="Ohashi K."/>
            <person name="Onuma M."/>
        </authorList>
    </citation>
    <scope>NUCLEOTIDE SEQUENCE [MRNA]</scope>
</reference>
<evidence type="ECO:0000250" key="1"/>
<evidence type="ECO:0000250" key="2">
    <source>
        <dbReference type="UniProtKB" id="P60568"/>
    </source>
</evidence>
<evidence type="ECO:0000255" key="3"/>
<evidence type="ECO:0000305" key="4"/>
<sequence>MYKLQFLSCIALTLALVANSAPTLSSTKDTKKQLEPLLLDLQFLLKEVNNYENLKLSRMLTFKFYMPKKATELKHLQCLMEELKPLEEVLNLAQSKNSHLTNIKDSMNNINLTVSELKGSETGFTCEYDDETVTVVEFLNKWITFCQSIYSTLT</sequence>
<gene>
    <name type="primary">IL2</name>
</gene>
<organism>
    <name type="scientific">Camelus bactrianus</name>
    <name type="common">Bactrian camel</name>
    <dbReference type="NCBI Taxonomy" id="9837"/>
    <lineage>
        <taxon>Eukaryota</taxon>
        <taxon>Metazoa</taxon>
        <taxon>Chordata</taxon>
        <taxon>Craniata</taxon>
        <taxon>Vertebrata</taxon>
        <taxon>Euteleostomi</taxon>
        <taxon>Mammalia</taxon>
        <taxon>Eutheria</taxon>
        <taxon>Laurasiatheria</taxon>
        <taxon>Artiodactyla</taxon>
        <taxon>Tylopoda</taxon>
        <taxon>Camelidae</taxon>
        <taxon>Camelus</taxon>
    </lineage>
</organism>